<comment type="subunit">
    <text>May form oligomeric structures.</text>
</comment>
<comment type="subcellular location">
    <subcellularLocation>
        <location evidence="2">Cytoplasm</location>
    </subcellularLocation>
</comment>
<comment type="similarity">
    <text evidence="1">Belongs to the small heat shock protein (HSP20) family.</text>
</comment>
<comment type="sequence caution" evidence="2">
    <conflict type="erroneous initiation">
        <sequence resource="EMBL-CDS" id="BAC42432"/>
    </conflict>
</comment>
<reference key="1">
    <citation type="journal article" date="1999" name="Nature">
        <title>Sequence and analysis of chromosome 4 of the plant Arabidopsis thaliana.</title>
        <authorList>
            <person name="Mayer K.F.X."/>
            <person name="Schueller C."/>
            <person name="Wambutt R."/>
            <person name="Murphy G."/>
            <person name="Volckaert G."/>
            <person name="Pohl T."/>
            <person name="Duesterhoeft A."/>
            <person name="Stiekema W."/>
            <person name="Entian K.-D."/>
            <person name="Terryn N."/>
            <person name="Harris B."/>
            <person name="Ansorge W."/>
            <person name="Brandt P."/>
            <person name="Grivell L.A."/>
            <person name="Rieger M."/>
            <person name="Weichselgartner M."/>
            <person name="de Simone V."/>
            <person name="Obermaier B."/>
            <person name="Mache R."/>
            <person name="Mueller M."/>
            <person name="Kreis M."/>
            <person name="Delseny M."/>
            <person name="Puigdomenech P."/>
            <person name="Watson M."/>
            <person name="Schmidtheini T."/>
            <person name="Reichert B."/>
            <person name="Portetelle D."/>
            <person name="Perez-Alonso M."/>
            <person name="Boutry M."/>
            <person name="Bancroft I."/>
            <person name="Vos P."/>
            <person name="Hoheisel J."/>
            <person name="Zimmermann W."/>
            <person name="Wedler H."/>
            <person name="Ridley P."/>
            <person name="Langham S.-A."/>
            <person name="McCullagh B."/>
            <person name="Bilham L."/>
            <person name="Robben J."/>
            <person name="van der Schueren J."/>
            <person name="Grymonprez B."/>
            <person name="Chuang Y.-J."/>
            <person name="Vandenbussche F."/>
            <person name="Braeken M."/>
            <person name="Weltjens I."/>
            <person name="Voet M."/>
            <person name="Bastiaens I."/>
            <person name="Aert R."/>
            <person name="Defoor E."/>
            <person name="Weitzenegger T."/>
            <person name="Bothe G."/>
            <person name="Ramsperger U."/>
            <person name="Hilbert H."/>
            <person name="Braun M."/>
            <person name="Holzer E."/>
            <person name="Brandt A."/>
            <person name="Peters S."/>
            <person name="van Staveren M."/>
            <person name="Dirkse W."/>
            <person name="Mooijman P."/>
            <person name="Klein Lankhorst R."/>
            <person name="Rose M."/>
            <person name="Hauf J."/>
            <person name="Koetter P."/>
            <person name="Berneiser S."/>
            <person name="Hempel S."/>
            <person name="Feldpausch M."/>
            <person name="Lamberth S."/>
            <person name="Van den Daele H."/>
            <person name="De Keyser A."/>
            <person name="Buysshaert C."/>
            <person name="Gielen J."/>
            <person name="Villarroel R."/>
            <person name="De Clercq R."/>
            <person name="van Montagu M."/>
            <person name="Rogers J."/>
            <person name="Cronin A."/>
            <person name="Quail M.A."/>
            <person name="Bray-Allen S."/>
            <person name="Clark L."/>
            <person name="Doggett J."/>
            <person name="Hall S."/>
            <person name="Kay M."/>
            <person name="Lennard N."/>
            <person name="McLay K."/>
            <person name="Mayes R."/>
            <person name="Pettett A."/>
            <person name="Rajandream M.A."/>
            <person name="Lyne M."/>
            <person name="Benes V."/>
            <person name="Rechmann S."/>
            <person name="Borkova D."/>
            <person name="Bloecker H."/>
            <person name="Scharfe M."/>
            <person name="Grimm M."/>
            <person name="Loehnert T.-H."/>
            <person name="Dose S."/>
            <person name="de Haan M."/>
            <person name="Maarse A.C."/>
            <person name="Schaefer M."/>
            <person name="Mueller-Auer S."/>
            <person name="Gabel C."/>
            <person name="Fuchs M."/>
            <person name="Fartmann B."/>
            <person name="Granderath K."/>
            <person name="Dauner D."/>
            <person name="Herzl A."/>
            <person name="Neumann S."/>
            <person name="Argiriou A."/>
            <person name="Vitale D."/>
            <person name="Liguori R."/>
            <person name="Piravandi E."/>
            <person name="Massenet O."/>
            <person name="Quigley F."/>
            <person name="Clabauld G."/>
            <person name="Muendlein A."/>
            <person name="Felber R."/>
            <person name="Schnabl S."/>
            <person name="Hiller R."/>
            <person name="Schmidt W."/>
            <person name="Lecharny A."/>
            <person name="Aubourg S."/>
            <person name="Chefdor F."/>
            <person name="Cooke R."/>
            <person name="Berger C."/>
            <person name="Monfort A."/>
            <person name="Casacuberta E."/>
            <person name="Gibbons T."/>
            <person name="Weber N."/>
            <person name="Vandenbol M."/>
            <person name="Bargues M."/>
            <person name="Terol J."/>
            <person name="Torres A."/>
            <person name="Perez-Perez A."/>
            <person name="Purnelle B."/>
            <person name="Bent E."/>
            <person name="Johnson S."/>
            <person name="Tacon D."/>
            <person name="Jesse T."/>
            <person name="Heijnen L."/>
            <person name="Schwarz S."/>
            <person name="Scholler P."/>
            <person name="Heber S."/>
            <person name="Francs P."/>
            <person name="Bielke C."/>
            <person name="Frishman D."/>
            <person name="Haase D."/>
            <person name="Lemcke K."/>
            <person name="Mewes H.-W."/>
            <person name="Stocker S."/>
            <person name="Zaccaria P."/>
            <person name="Bevan M."/>
            <person name="Wilson R.K."/>
            <person name="de la Bastide M."/>
            <person name="Habermann K."/>
            <person name="Parnell L."/>
            <person name="Dedhia N."/>
            <person name="Gnoj L."/>
            <person name="Schutz K."/>
            <person name="Huang E."/>
            <person name="Spiegel L."/>
            <person name="Sekhon M."/>
            <person name="Murray J."/>
            <person name="Sheet P."/>
            <person name="Cordes M."/>
            <person name="Abu-Threideh J."/>
            <person name="Stoneking T."/>
            <person name="Kalicki J."/>
            <person name="Graves T."/>
            <person name="Harmon G."/>
            <person name="Edwards J."/>
            <person name="Latreille P."/>
            <person name="Courtney L."/>
            <person name="Cloud J."/>
            <person name="Abbott A."/>
            <person name="Scott K."/>
            <person name="Johnson D."/>
            <person name="Minx P."/>
            <person name="Bentley D."/>
            <person name="Fulton B."/>
            <person name="Miller N."/>
            <person name="Greco T."/>
            <person name="Kemp K."/>
            <person name="Kramer J."/>
            <person name="Fulton L."/>
            <person name="Mardis E."/>
            <person name="Dante M."/>
            <person name="Pepin K."/>
            <person name="Hillier L.W."/>
            <person name="Nelson J."/>
            <person name="Spieth J."/>
            <person name="Ryan E."/>
            <person name="Andrews S."/>
            <person name="Geisel C."/>
            <person name="Layman D."/>
            <person name="Du H."/>
            <person name="Ali J."/>
            <person name="Berghoff A."/>
            <person name="Jones K."/>
            <person name="Drone K."/>
            <person name="Cotton M."/>
            <person name="Joshu C."/>
            <person name="Antonoiu B."/>
            <person name="Zidanic M."/>
            <person name="Strong C."/>
            <person name="Sun H."/>
            <person name="Lamar B."/>
            <person name="Yordan C."/>
            <person name="Ma P."/>
            <person name="Zhong J."/>
            <person name="Preston R."/>
            <person name="Vil D."/>
            <person name="Shekher M."/>
            <person name="Matero A."/>
            <person name="Shah R."/>
            <person name="Swaby I.K."/>
            <person name="O'Shaughnessy A."/>
            <person name="Rodriguez M."/>
            <person name="Hoffman J."/>
            <person name="Till S."/>
            <person name="Granat S."/>
            <person name="Shohdy N."/>
            <person name="Hasegawa A."/>
            <person name="Hameed A."/>
            <person name="Lodhi M."/>
            <person name="Johnson A."/>
            <person name="Chen E."/>
            <person name="Marra M.A."/>
            <person name="Martienssen R."/>
            <person name="McCombie W.R."/>
        </authorList>
    </citation>
    <scope>NUCLEOTIDE SEQUENCE [LARGE SCALE GENOMIC DNA]</scope>
    <source>
        <strain>cv. Columbia</strain>
    </source>
</reference>
<reference key="2">
    <citation type="journal article" date="2017" name="Plant J.">
        <title>Araport11: a complete reannotation of the Arabidopsis thaliana reference genome.</title>
        <authorList>
            <person name="Cheng C.Y."/>
            <person name="Krishnakumar V."/>
            <person name="Chan A.P."/>
            <person name="Thibaud-Nissen F."/>
            <person name="Schobel S."/>
            <person name="Town C.D."/>
        </authorList>
    </citation>
    <scope>GENOME REANNOTATION</scope>
    <source>
        <strain>cv. Columbia</strain>
    </source>
</reference>
<reference key="3">
    <citation type="submission" date="2006-05" db="EMBL/GenBank/DDBJ databases">
        <title>Arabidopsis ORF clones.</title>
        <authorList>
            <person name="Quinitio C."/>
            <person name="Chen H."/>
            <person name="Kim C.J."/>
            <person name="Shinn P."/>
            <person name="Ecker J.R."/>
        </authorList>
    </citation>
    <scope>NUCLEOTIDE SEQUENCE [LARGE SCALE MRNA]</scope>
    <source>
        <strain>cv. Columbia</strain>
    </source>
</reference>
<reference key="4">
    <citation type="submission" date="2002-03" db="EMBL/GenBank/DDBJ databases">
        <title>Full-length cDNA from Arabidopsis thaliana.</title>
        <authorList>
            <person name="Brover V.V."/>
            <person name="Troukhan M.E."/>
            <person name="Alexandrov N.A."/>
            <person name="Lu Y.-P."/>
            <person name="Flavell R.B."/>
            <person name="Feldmann K.A."/>
        </authorList>
    </citation>
    <scope>NUCLEOTIDE SEQUENCE [LARGE SCALE MRNA]</scope>
</reference>
<reference key="5">
    <citation type="journal article" date="2002" name="Science">
        <title>Functional annotation of a full-length Arabidopsis cDNA collection.</title>
        <authorList>
            <person name="Seki M."/>
            <person name="Narusaka M."/>
            <person name="Kamiya A."/>
            <person name="Ishida J."/>
            <person name="Satou M."/>
            <person name="Sakurai T."/>
            <person name="Nakajima M."/>
            <person name="Enju A."/>
            <person name="Akiyama K."/>
            <person name="Oono Y."/>
            <person name="Muramatsu M."/>
            <person name="Hayashizaki Y."/>
            <person name="Kawai J."/>
            <person name="Carninci P."/>
            <person name="Itoh M."/>
            <person name="Ishii Y."/>
            <person name="Arakawa T."/>
            <person name="Shibata K."/>
            <person name="Shinagawa A."/>
            <person name="Shinozaki K."/>
        </authorList>
    </citation>
    <scope>NUCLEOTIDE SEQUENCE [LARGE SCALE MRNA] OF 33-134</scope>
    <source>
        <strain>cv. Columbia</strain>
    </source>
</reference>
<proteinExistence type="evidence at transcript level"/>
<accession>O49710</accession>
<accession>Q8GY90</accession>
<keyword id="KW-0963">Cytoplasm</keyword>
<keyword id="KW-1185">Reference proteome</keyword>
<keyword id="KW-0346">Stress response</keyword>
<gene>
    <name type="primary">HSP15.4</name>
    <name type="ordered locus">At4g21870</name>
    <name type="ORF">T8O5.80</name>
</gene>
<protein>
    <recommendedName>
        <fullName>15.4 kDa class V heat shock protein</fullName>
    </recommendedName>
    <alternativeName>
        <fullName>15.4 kDa heat shock protein</fullName>
        <shortName>AtHsp15.4</shortName>
    </alternativeName>
</protein>
<organism>
    <name type="scientific">Arabidopsis thaliana</name>
    <name type="common">Mouse-ear cress</name>
    <dbReference type="NCBI Taxonomy" id="3702"/>
    <lineage>
        <taxon>Eukaryota</taxon>
        <taxon>Viridiplantae</taxon>
        <taxon>Streptophyta</taxon>
        <taxon>Embryophyta</taxon>
        <taxon>Tracheophyta</taxon>
        <taxon>Spermatophyta</taxon>
        <taxon>Magnoliopsida</taxon>
        <taxon>eudicotyledons</taxon>
        <taxon>Gunneridae</taxon>
        <taxon>Pentapetalae</taxon>
        <taxon>rosids</taxon>
        <taxon>malvids</taxon>
        <taxon>Brassicales</taxon>
        <taxon>Brassicaceae</taxon>
        <taxon>Camelineae</taxon>
        <taxon>Arabidopsis</taxon>
    </lineage>
</organism>
<dbReference type="EMBL" id="AL021890">
    <property type="protein sequence ID" value="CAA17154.1"/>
    <property type="molecule type" value="Genomic_DNA"/>
</dbReference>
<dbReference type="EMBL" id="AL161556">
    <property type="protein sequence ID" value="CAB79142.1"/>
    <property type="molecule type" value="Genomic_DNA"/>
</dbReference>
<dbReference type="EMBL" id="CP002687">
    <property type="protein sequence ID" value="AEE84517.1"/>
    <property type="molecule type" value="Genomic_DNA"/>
</dbReference>
<dbReference type="EMBL" id="BT025602">
    <property type="protein sequence ID" value="ABF59020.1"/>
    <property type="molecule type" value="mRNA"/>
</dbReference>
<dbReference type="EMBL" id="AY086272">
    <property type="protein sequence ID" value="AAM64345.1"/>
    <property type="molecule type" value="mRNA"/>
</dbReference>
<dbReference type="EMBL" id="AK117785">
    <property type="protein sequence ID" value="BAC42432.1"/>
    <property type="status" value="ALT_INIT"/>
    <property type="molecule type" value="mRNA"/>
</dbReference>
<dbReference type="PIR" id="T05469">
    <property type="entry name" value="T05469"/>
</dbReference>
<dbReference type="RefSeq" id="NP_193918.1">
    <property type="nucleotide sequence ID" value="NM_118308.4"/>
</dbReference>
<dbReference type="SMR" id="O49710"/>
<dbReference type="FunCoup" id="O49710">
    <property type="interactions" value="23"/>
</dbReference>
<dbReference type="STRING" id="3702.O49710"/>
<dbReference type="PaxDb" id="3702-AT4G21870.1"/>
<dbReference type="ProteomicsDB" id="228748"/>
<dbReference type="EnsemblPlants" id="AT4G21870.1">
    <property type="protein sequence ID" value="AT4G21870.1"/>
    <property type="gene ID" value="AT4G21870"/>
</dbReference>
<dbReference type="GeneID" id="828276"/>
<dbReference type="Gramene" id="AT4G21870.1">
    <property type="protein sequence ID" value="AT4G21870.1"/>
    <property type="gene ID" value="AT4G21870"/>
</dbReference>
<dbReference type="KEGG" id="ath:AT4G21870"/>
<dbReference type="Araport" id="AT4G21870"/>
<dbReference type="TAIR" id="AT4G21870"/>
<dbReference type="eggNOG" id="KOG0710">
    <property type="taxonomic scope" value="Eukaryota"/>
</dbReference>
<dbReference type="HOGENOM" id="CLU_046737_13_1_1"/>
<dbReference type="InParanoid" id="O49710"/>
<dbReference type="OMA" id="PENHVNW"/>
<dbReference type="OrthoDB" id="1431247at2759"/>
<dbReference type="PhylomeDB" id="O49710"/>
<dbReference type="PRO" id="PR:O49710"/>
<dbReference type="Proteomes" id="UP000006548">
    <property type="component" value="Chromosome 4"/>
</dbReference>
<dbReference type="ExpressionAtlas" id="O49710">
    <property type="expression patterns" value="baseline and differential"/>
</dbReference>
<dbReference type="GO" id="GO:0005737">
    <property type="term" value="C:cytoplasm"/>
    <property type="evidence" value="ECO:0007669"/>
    <property type="project" value="UniProtKB-SubCell"/>
</dbReference>
<dbReference type="FunFam" id="2.60.40.790:FF:000076">
    <property type="entry name" value="15.4 kDa class V heat shock protein"/>
    <property type="match status" value="1"/>
</dbReference>
<dbReference type="Gene3D" id="2.60.40.790">
    <property type="match status" value="1"/>
</dbReference>
<dbReference type="InterPro" id="IPR002068">
    <property type="entry name" value="A-crystallin/Hsp20_dom"/>
</dbReference>
<dbReference type="InterPro" id="IPR008978">
    <property type="entry name" value="HSP20-like_chaperone"/>
</dbReference>
<dbReference type="InterPro" id="IPR031107">
    <property type="entry name" value="Small_HSP"/>
</dbReference>
<dbReference type="PANTHER" id="PTHR11527">
    <property type="entry name" value="HEAT-SHOCK PROTEIN 20 FAMILY MEMBER"/>
    <property type="match status" value="1"/>
</dbReference>
<dbReference type="Pfam" id="PF00011">
    <property type="entry name" value="HSP20"/>
    <property type="match status" value="1"/>
</dbReference>
<dbReference type="SUPFAM" id="SSF49764">
    <property type="entry name" value="HSP20-like chaperones"/>
    <property type="match status" value="1"/>
</dbReference>
<dbReference type="PROSITE" id="PS01031">
    <property type="entry name" value="SHSP"/>
    <property type="match status" value="1"/>
</dbReference>
<sequence length="134" mass="15387">MDFQTIQVMPWEYVLASQSLNNYQENHVRWSQSPDSHTFSVDLPGLRKEEIKVEIEDSIYLIIRTEATPMSPPDQPLKTFKRKFRLPESIDMIGISAGYEDGVLTVIVPKRIMTRRLIDPSDVPESLQLLARAA</sequence>
<feature type="chain" id="PRO_0000387489" description="15.4 kDa class V heat shock protein">
    <location>
        <begin position="1"/>
        <end position="134"/>
    </location>
</feature>
<feature type="domain" description="sHSP" evidence="1">
    <location>
        <begin position="19"/>
        <end position="126"/>
    </location>
</feature>
<evidence type="ECO:0000255" key="1">
    <source>
        <dbReference type="PROSITE-ProRule" id="PRU00285"/>
    </source>
</evidence>
<evidence type="ECO:0000305" key="2"/>
<name>HS154_ARATH</name>